<comment type="function">
    <text evidence="1">One of the primary rRNA binding proteins, it binds directly to 16S rRNA central domain where it helps coordinate assembly of the platform of the 30S subunit.</text>
</comment>
<comment type="subunit">
    <text evidence="1">Part of the 30S ribosomal subunit. Contacts proteins S5 and S12.</text>
</comment>
<comment type="similarity">
    <text evidence="1">Belongs to the universal ribosomal protein uS8 family.</text>
</comment>
<reference key="1">
    <citation type="journal article" date="2011" name="J. Bacteriol.">
        <title>Genome of Ochrobactrum anthropi ATCC 49188 T, a versatile opportunistic pathogen and symbiont of several eukaryotic hosts.</title>
        <authorList>
            <person name="Chain P.S."/>
            <person name="Lang D.M."/>
            <person name="Comerci D.J."/>
            <person name="Malfatti S.A."/>
            <person name="Vergez L.M."/>
            <person name="Shin M."/>
            <person name="Ugalde R.A."/>
            <person name="Garcia E."/>
            <person name="Tolmasky M.E."/>
        </authorList>
    </citation>
    <scope>NUCLEOTIDE SEQUENCE [LARGE SCALE GENOMIC DNA]</scope>
    <source>
        <strain>ATCC 49188 / DSM 6882 / CCUG 24695 / JCM 21032 / LMG 3331 / NBRC 15819 / NCTC 12168 / Alc 37</strain>
    </source>
</reference>
<sequence>MSVSDPIGDMLTRIRNAVGRKKTKVSTPASKLRARVLDVLQSEGYIRGYTQSEFVNGKAEIEIELKYYEGVPVIRELTRVSKPGRRVYVSVKSIPQVANGLGISILSTPKGVMADHEAREQNVGGELLCRIF</sequence>
<dbReference type="EMBL" id="CP000758">
    <property type="protein sequence ID" value="ABS14686.1"/>
    <property type="molecule type" value="Genomic_DNA"/>
</dbReference>
<dbReference type="RefSeq" id="WP_007875325.1">
    <property type="nucleotide sequence ID" value="NC_009667.1"/>
</dbReference>
<dbReference type="SMR" id="A6X0D2"/>
<dbReference type="STRING" id="439375.Oant_1970"/>
<dbReference type="GeneID" id="93108657"/>
<dbReference type="KEGG" id="oan:Oant_1970"/>
<dbReference type="eggNOG" id="COG0096">
    <property type="taxonomic scope" value="Bacteria"/>
</dbReference>
<dbReference type="HOGENOM" id="CLU_098428_0_0_5"/>
<dbReference type="PhylomeDB" id="A6X0D2"/>
<dbReference type="Proteomes" id="UP000002301">
    <property type="component" value="Chromosome 1"/>
</dbReference>
<dbReference type="GO" id="GO:1990904">
    <property type="term" value="C:ribonucleoprotein complex"/>
    <property type="evidence" value="ECO:0007669"/>
    <property type="project" value="UniProtKB-KW"/>
</dbReference>
<dbReference type="GO" id="GO:0005840">
    <property type="term" value="C:ribosome"/>
    <property type="evidence" value="ECO:0007669"/>
    <property type="project" value="UniProtKB-KW"/>
</dbReference>
<dbReference type="GO" id="GO:0019843">
    <property type="term" value="F:rRNA binding"/>
    <property type="evidence" value="ECO:0007669"/>
    <property type="project" value="UniProtKB-UniRule"/>
</dbReference>
<dbReference type="GO" id="GO:0003735">
    <property type="term" value="F:structural constituent of ribosome"/>
    <property type="evidence" value="ECO:0007669"/>
    <property type="project" value="InterPro"/>
</dbReference>
<dbReference type="GO" id="GO:0006412">
    <property type="term" value="P:translation"/>
    <property type="evidence" value="ECO:0007669"/>
    <property type="project" value="UniProtKB-UniRule"/>
</dbReference>
<dbReference type="FunFam" id="3.30.1370.30:FF:000002">
    <property type="entry name" value="30S ribosomal protein S8"/>
    <property type="match status" value="1"/>
</dbReference>
<dbReference type="FunFam" id="3.30.1490.10:FF:000001">
    <property type="entry name" value="30S ribosomal protein S8"/>
    <property type="match status" value="1"/>
</dbReference>
<dbReference type="Gene3D" id="3.30.1370.30">
    <property type="match status" value="1"/>
</dbReference>
<dbReference type="Gene3D" id="3.30.1490.10">
    <property type="match status" value="1"/>
</dbReference>
<dbReference type="HAMAP" id="MF_01302_B">
    <property type="entry name" value="Ribosomal_uS8_B"/>
    <property type="match status" value="1"/>
</dbReference>
<dbReference type="InterPro" id="IPR000630">
    <property type="entry name" value="Ribosomal_uS8"/>
</dbReference>
<dbReference type="InterPro" id="IPR047863">
    <property type="entry name" value="Ribosomal_uS8_CS"/>
</dbReference>
<dbReference type="InterPro" id="IPR035987">
    <property type="entry name" value="Ribosomal_uS8_sf"/>
</dbReference>
<dbReference type="NCBIfam" id="NF001109">
    <property type="entry name" value="PRK00136.1"/>
    <property type="match status" value="1"/>
</dbReference>
<dbReference type="PANTHER" id="PTHR11758">
    <property type="entry name" value="40S RIBOSOMAL PROTEIN S15A"/>
    <property type="match status" value="1"/>
</dbReference>
<dbReference type="Pfam" id="PF00410">
    <property type="entry name" value="Ribosomal_S8"/>
    <property type="match status" value="1"/>
</dbReference>
<dbReference type="SUPFAM" id="SSF56047">
    <property type="entry name" value="Ribosomal protein S8"/>
    <property type="match status" value="1"/>
</dbReference>
<dbReference type="PROSITE" id="PS00053">
    <property type="entry name" value="RIBOSOMAL_S8"/>
    <property type="match status" value="1"/>
</dbReference>
<accession>A6X0D2</accession>
<proteinExistence type="inferred from homology"/>
<organism>
    <name type="scientific">Brucella anthropi (strain ATCC 49188 / DSM 6882 / CCUG 24695 / JCM 21032 / LMG 3331 / NBRC 15819 / NCTC 12168 / Alc 37)</name>
    <name type="common">Ochrobactrum anthropi</name>
    <dbReference type="NCBI Taxonomy" id="439375"/>
    <lineage>
        <taxon>Bacteria</taxon>
        <taxon>Pseudomonadati</taxon>
        <taxon>Pseudomonadota</taxon>
        <taxon>Alphaproteobacteria</taxon>
        <taxon>Hyphomicrobiales</taxon>
        <taxon>Brucellaceae</taxon>
        <taxon>Brucella/Ochrobactrum group</taxon>
        <taxon>Brucella</taxon>
    </lineage>
</organism>
<name>RS8_BRUA4</name>
<protein>
    <recommendedName>
        <fullName evidence="1">Small ribosomal subunit protein uS8</fullName>
    </recommendedName>
    <alternativeName>
        <fullName evidence="2">30S ribosomal protein S8</fullName>
    </alternativeName>
</protein>
<gene>
    <name evidence="1" type="primary">rpsH</name>
    <name type="ordered locus">Oant_1970</name>
</gene>
<feature type="chain" id="PRO_1000051789" description="Small ribosomal subunit protein uS8">
    <location>
        <begin position="1"/>
        <end position="132"/>
    </location>
</feature>
<evidence type="ECO:0000255" key="1">
    <source>
        <dbReference type="HAMAP-Rule" id="MF_01302"/>
    </source>
</evidence>
<evidence type="ECO:0000305" key="2"/>
<keyword id="KW-1185">Reference proteome</keyword>
<keyword id="KW-0687">Ribonucleoprotein</keyword>
<keyword id="KW-0689">Ribosomal protein</keyword>
<keyword id="KW-0694">RNA-binding</keyword>
<keyword id="KW-0699">rRNA-binding</keyword>